<keyword id="KW-0511">Multifunctional enzyme</keyword>
<keyword id="KW-0596">Phosphopantetheine</keyword>
<keyword id="KW-0597">Phosphoprotein</keyword>
<keyword id="KW-0677">Repeat</keyword>
<keyword id="KW-0808">Transferase</keyword>
<comment type="function">
    <text evidence="8 9 10 11">Polyketide synthase; part of the Pks1 gene cluster that mediates the biosynthesis of an anthraquinone derivative pigment that contributes to conidial pigmentation that provides protection from UV radiation, heat and cold stress (PubMed:25445307, PubMed:28447400, PubMed:29958281). The polyketide synthase Pks1 produces 1-acetyl-2,4,6,8-tetrahydroxy-9,10-anthraquinone though condensation of acetyl-CoA with malonyl-CoA (PubMed:29958281). The dehydratase EthD and the laccase Mlac1 further convert the anthraquinone derivative into the final conidial pigment (PubMed:20382249, PubMed:25445307, PubMed:28447400).</text>
</comment>
<comment type="pathway">
    <text evidence="9 10 11">Pigment biosynthesis.</text>
</comment>
<comment type="induction">
    <text evidence="10 11">Highly expressed during conidiation (PubMed:28447400). A conserved conidiation regulatory pathway containing BrlA, AbaA and WetA regulates expression. During conidiation BlrA up-regulates AbaA, which in turn controls WetA. Moreover, the Hog1 MAPK regulates fungal conidiation by controlling the conidiation regulatory pathway, and that all three pigmentation genes Pks1, EthD and Mlac1 exercise feedback regulation of conidiation (PubMed:28447400). Expression is positively regulated by Opy2 and the Slt2 MAPK (PubMed:29958281).</text>
</comment>
<comment type="domain">
    <text evidence="14">Multidomain protein; including a starter unit:ACP transacylase (SAT) that selects the starter unit; a ketosynthase (KS) that catalyzes repeated decarboxylative condensation to elongate the polyketide backbone; a malonyl-CoA:ACP transacylase (MAT) that selects and transfers the extender unit malonyl-CoA; a product template (PT) domain that controls the immediate cyclization regioselectivity of the reactive polyketide backbone; and an acyl-carrier protein (ACP) that serves as the tether of the growing and completed polyketide via its phosphopantetheinyl arm.</text>
</comment>
<comment type="domain">
    <text evidence="14">The release of the polyketide chain from the non-reducing polyketide synthase is mediated by the thioesterase (TE) domain localized at the C-ter of the protein.</text>
</comment>
<comment type="disruption phenotype">
    <text evidence="9 11">Results in red conidia.</text>
</comment>
<name>PKS1_METRA</name>
<feature type="chain" id="PRO_0000445746" description="Polyketide synthase 1">
    <location>
        <begin position="1"/>
        <end position="2148"/>
    </location>
</feature>
<feature type="domain" description="Ketosynthase family 3 (KS3)" evidence="4 14">
    <location>
        <begin position="394"/>
        <end position="829"/>
    </location>
</feature>
<feature type="domain" description="PKS/mFAS DH" evidence="5">
    <location>
        <begin position="1314"/>
        <end position="1619"/>
    </location>
</feature>
<feature type="domain" description="Carrier 1" evidence="3 14">
    <location>
        <begin position="1678"/>
        <end position="1752"/>
    </location>
</feature>
<feature type="domain" description="Carrier 2" evidence="3 14">
    <location>
        <begin position="1793"/>
        <end position="1870"/>
    </location>
</feature>
<feature type="region of interest" description="N-terminal acylcarrier protein transacylase domain (SAT)" evidence="2 14">
    <location>
        <begin position="19"/>
        <end position="261"/>
    </location>
</feature>
<feature type="region of interest" description="Malonyl-CoA:ACP transacylase (MAT) domain" evidence="2 14">
    <location>
        <begin position="930"/>
        <end position="1236"/>
    </location>
</feature>
<feature type="region of interest" description="Product template (PT) domain" evidence="2 14">
    <location>
        <begin position="1310"/>
        <end position="1624"/>
    </location>
</feature>
<feature type="region of interest" description="N-terminal hotdog fold" evidence="5">
    <location>
        <begin position="1314"/>
        <end position="1447"/>
    </location>
</feature>
<feature type="region of interest" description="C-terminal hotdog fold" evidence="5">
    <location>
        <begin position="1474"/>
        <end position="1619"/>
    </location>
</feature>
<feature type="region of interest" description="Disordered" evidence="7">
    <location>
        <begin position="1619"/>
        <end position="1655"/>
    </location>
</feature>
<feature type="region of interest" description="Disordered" evidence="7">
    <location>
        <begin position="1755"/>
        <end position="1796"/>
    </location>
</feature>
<feature type="region of interest" description="Thioesterase (TE) domain" evidence="2 14">
    <location>
        <begin position="1882"/>
        <end position="2146"/>
    </location>
</feature>
<feature type="compositionally biased region" description="Low complexity" evidence="7">
    <location>
        <begin position="1634"/>
        <end position="1650"/>
    </location>
</feature>
<feature type="compositionally biased region" description="Low complexity" evidence="7">
    <location>
        <begin position="1755"/>
        <end position="1790"/>
    </location>
</feature>
<feature type="active site" description="For beta-ketoacyl synthase activity" evidence="4">
    <location>
        <position position="566"/>
    </location>
</feature>
<feature type="active site" description="For beta-ketoacyl synthase activity" evidence="4">
    <location>
        <position position="701"/>
    </location>
</feature>
<feature type="active site" description="For beta-ketoacyl synthase activity" evidence="4">
    <location>
        <position position="745"/>
    </location>
</feature>
<feature type="active site" description="For acyl/malonyl transferase activity" evidence="6">
    <location>
        <position position="1018"/>
    </location>
</feature>
<feature type="active site" description="Proton acceptor; for dehydratase activity" evidence="5">
    <location>
        <position position="1346"/>
    </location>
</feature>
<feature type="active site" description="Proton donor; for dehydratase activity" evidence="5">
    <location>
        <position position="1533"/>
    </location>
</feature>
<feature type="active site" description="For thioesterase activity" evidence="1">
    <location>
        <position position="1973"/>
    </location>
</feature>
<feature type="modified residue" description="O-(pantetheine 4'-phosphoryl)serine" evidence="3">
    <location>
        <position position="1712"/>
    </location>
</feature>
<feature type="modified residue" description="O-(pantetheine 4'-phosphoryl)serine" evidence="3">
    <location>
        <position position="1830"/>
    </location>
</feature>
<dbReference type="EC" id="2.3.1.-" evidence="11"/>
<dbReference type="EMBL" id="ADNJ02000010">
    <property type="protein sequence ID" value="EFY96684.2"/>
    <property type="molecule type" value="Genomic_DNA"/>
</dbReference>
<dbReference type="RefSeq" id="XP_007823934.2">
    <property type="nucleotide sequence ID" value="XM_007825743.2"/>
</dbReference>
<dbReference type="SMR" id="E9F646"/>
<dbReference type="ESTHER" id="metaf-pks1">
    <property type="family name" value="Thioesterase"/>
</dbReference>
<dbReference type="GeneID" id="19262031"/>
<dbReference type="KEGG" id="maj:MAA_07745"/>
<dbReference type="HOGENOM" id="CLU_000022_6_0_1"/>
<dbReference type="OrthoDB" id="329835at2759"/>
<dbReference type="Proteomes" id="UP000002498">
    <property type="component" value="Unassembled WGS sequence"/>
</dbReference>
<dbReference type="GO" id="GO:0004315">
    <property type="term" value="F:3-oxoacyl-[acyl-carrier-protein] synthase activity"/>
    <property type="evidence" value="ECO:0007669"/>
    <property type="project" value="InterPro"/>
</dbReference>
<dbReference type="GO" id="GO:0004312">
    <property type="term" value="F:fatty acid synthase activity"/>
    <property type="evidence" value="ECO:0007669"/>
    <property type="project" value="TreeGrafter"/>
</dbReference>
<dbReference type="GO" id="GO:0031177">
    <property type="term" value="F:phosphopantetheine binding"/>
    <property type="evidence" value="ECO:0007669"/>
    <property type="project" value="InterPro"/>
</dbReference>
<dbReference type="GO" id="GO:0006633">
    <property type="term" value="P:fatty acid biosynthetic process"/>
    <property type="evidence" value="ECO:0007669"/>
    <property type="project" value="InterPro"/>
</dbReference>
<dbReference type="GO" id="GO:0044550">
    <property type="term" value="P:secondary metabolite biosynthetic process"/>
    <property type="evidence" value="ECO:0007669"/>
    <property type="project" value="TreeGrafter"/>
</dbReference>
<dbReference type="CDD" id="cd00833">
    <property type="entry name" value="PKS"/>
    <property type="match status" value="1"/>
</dbReference>
<dbReference type="FunFam" id="3.40.366.10:FF:000002">
    <property type="entry name" value="Probable polyketide synthase 2"/>
    <property type="match status" value="1"/>
</dbReference>
<dbReference type="FunFam" id="3.10.129.110:FF:000001">
    <property type="entry name" value="Sterigmatocystin biosynthesis polyketide synthase"/>
    <property type="match status" value="1"/>
</dbReference>
<dbReference type="FunFam" id="3.40.47.10:FF:000031">
    <property type="entry name" value="Sterigmatocystin biosynthesis polyketide synthase"/>
    <property type="match status" value="1"/>
</dbReference>
<dbReference type="FunFam" id="3.40.50.1820:FF:000116">
    <property type="entry name" value="Sterigmatocystin biosynthesis polyketide synthase"/>
    <property type="match status" value="1"/>
</dbReference>
<dbReference type="Gene3D" id="3.30.70.3290">
    <property type="match status" value="1"/>
</dbReference>
<dbReference type="Gene3D" id="3.40.47.10">
    <property type="match status" value="1"/>
</dbReference>
<dbReference type="Gene3D" id="1.10.1200.10">
    <property type="entry name" value="ACP-like"/>
    <property type="match status" value="2"/>
</dbReference>
<dbReference type="Gene3D" id="3.40.50.1820">
    <property type="entry name" value="alpha/beta hydrolase"/>
    <property type="match status" value="1"/>
</dbReference>
<dbReference type="Gene3D" id="3.40.366.10">
    <property type="entry name" value="Malonyl-Coenzyme A Acyl Carrier Protein, domain 2"/>
    <property type="match status" value="2"/>
</dbReference>
<dbReference type="Gene3D" id="3.10.129.110">
    <property type="entry name" value="Polyketide synthase dehydratase"/>
    <property type="match status" value="1"/>
</dbReference>
<dbReference type="InterPro" id="IPR029058">
    <property type="entry name" value="AB_hydrolase_fold"/>
</dbReference>
<dbReference type="InterPro" id="IPR001227">
    <property type="entry name" value="Ac_transferase_dom_sf"/>
</dbReference>
<dbReference type="InterPro" id="IPR036736">
    <property type="entry name" value="ACP-like_sf"/>
</dbReference>
<dbReference type="InterPro" id="IPR014043">
    <property type="entry name" value="Acyl_transferase_dom"/>
</dbReference>
<dbReference type="InterPro" id="IPR016035">
    <property type="entry name" value="Acyl_Trfase/lysoPLipase"/>
</dbReference>
<dbReference type="InterPro" id="IPR018201">
    <property type="entry name" value="Ketoacyl_synth_AS"/>
</dbReference>
<dbReference type="InterPro" id="IPR014031">
    <property type="entry name" value="Ketoacyl_synth_C"/>
</dbReference>
<dbReference type="InterPro" id="IPR014030">
    <property type="entry name" value="Ketoacyl_synth_N"/>
</dbReference>
<dbReference type="InterPro" id="IPR016036">
    <property type="entry name" value="Malonyl_transacylase_ACP-bd"/>
</dbReference>
<dbReference type="InterPro" id="IPR020841">
    <property type="entry name" value="PKS_Beta-ketoAc_synthase_dom"/>
</dbReference>
<dbReference type="InterPro" id="IPR042104">
    <property type="entry name" value="PKS_dehydratase_sf"/>
</dbReference>
<dbReference type="InterPro" id="IPR049900">
    <property type="entry name" value="PKS_mFAS_DH"/>
</dbReference>
<dbReference type="InterPro" id="IPR050091">
    <property type="entry name" value="PKS_NRPS_Biosynth_Enz"/>
</dbReference>
<dbReference type="InterPro" id="IPR020806">
    <property type="entry name" value="PKS_PP-bd"/>
</dbReference>
<dbReference type="InterPro" id="IPR009081">
    <property type="entry name" value="PP-bd_ACP"/>
</dbReference>
<dbReference type="InterPro" id="IPR006162">
    <property type="entry name" value="Ppantetheine_attach_site"/>
</dbReference>
<dbReference type="InterPro" id="IPR030918">
    <property type="entry name" value="PT_fungal_PKS"/>
</dbReference>
<dbReference type="InterPro" id="IPR032088">
    <property type="entry name" value="SAT"/>
</dbReference>
<dbReference type="InterPro" id="IPR001031">
    <property type="entry name" value="Thioesterase"/>
</dbReference>
<dbReference type="InterPro" id="IPR016039">
    <property type="entry name" value="Thiolase-like"/>
</dbReference>
<dbReference type="NCBIfam" id="TIGR04532">
    <property type="entry name" value="PT_fungal_PKS"/>
    <property type="match status" value="1"/>
</dbReference>
<dbReference type="PANTHER" id="PTHR43775:SF45">
    <property type="entry name" value="CONIDIAL PIGMENT POLYKETIDE SYNTHASE ALB1"/>
    <property type="match status" value="1"/>
</dbReference>
<dbReference type="PANTHER" id="PTHR43775">
    <property type="entry name" value="FATTY ACID SYNTHASE"/>
    <property type="match status" value="1"/>
</dbReference>
<dbReference type="Pfam" id="PF00698">
    <property type="entry name" value="Acyl_transf_1"/>
    <property type="match status" value="1"/>
</dbReference>
<dbReference type="Pfam" id="PF22621">
    <property type="entry name" value="CurL-like_PKS_C"/>
    <property type="match status" value="1"/>
</dbReference>
<dbReference type="Pfam" id="PF00109">
    <property type="entry name" value="ketoacyl-synt"/>
    <property type="match status" value="1"/>
</dbReference>
<dbReference type="Pfam" id="PF02801">
    <property type="entry name" value="Ketoacyl-synt_C"/>
    <property type="match status" value="1"/>
</dbReference>
<dbReference type="Pfam" id="PF00550">
    <property type="entry name" value="PP-binding"/>
    <property type="match status" value="2"/>
</dbReference>
<dbReference type="Pfam" id="PF16073">
    <property type="entry name" value="SAT"/>
    <property type="match status" value="1"/>
</dbReference>
<dbReference type="Pfam" id="PF00975">
    <property type="entry name" value="Thioesterase"/>
    <property type="match status" value="1"/>
</dbReference>
<dbReference type="SMART" id="SM00827">
    <property type="entry name" value="PKS_AT"/>
    <property type="match status" value="1"/>
</dbReference>
<dbReference type="SMART" id="SM00825">
    <property type="entry name" value="PKS_KS"/>
    <property type="match status" value="1"/>
</dbReference>
<dbReference type="SMART" id="SM00823">
    <property type="entry name" value="PKS_PP"/>
    <property type="match status" value="2"/>
</dbReference>
<dbReference type="SUPFAM" id="SSF47336">
    <property type="entry name" value="ACP-like"/>
    <property type="match status" value="2"/>
</dbReference>
<dbReference type="SUPFAM" id="SSF53474">
    <property type="entry name" value="alpha/beta-Hydrolases"/>
    <property type="match status" value="1"/>
</dbReference>
<dbReference type="SUPFAM" id="SSF52151">
    <property type="entry name" value="FabD/lysophospholipase-like"/>
    <property type="match status" value="1"/>
</dbReference>
<dbReference type="SUPFAM" id="SSF55048">
    <property type="entry name" value="Probable ACP-binding domain of malonyl-CoA ACP transacylase"/>
    <property type="match status" value="1"/>
</dbReference>
<dbReference type="SUPFAM" id="SSF53901">
    <property type="entry name" value="Thiolase-like"/>
    <property type="match status" value="1"/>
</dbReference>
<dbReference type="PROSITE" id="PS50075">
    <property type="entry name" value="CARRIER"/>
    <property type="match status" value="2"/>
</dbReference>
<dbReference type="PROSITE" id="PS00606">
    <property type="entry name" value="KS3_1"/>
    <property type="match status" value="1"/>
</dbReference>
<dbReference type="PROSITE" id="PS52004">
    <property type="entry name" value="KS3_2"/>
    <property type="match status" value="1"/>
</dbReference>
<dbReference type="PROSITE" id="PS00012">
    <property type="entry name" value="PHOSPHOPANTETHEINE"/>
    <property type="match status" value="1"/>
</dbReference>
<dbReference type="PROSITE" id="PS52019">
    <property type="entry name" value="PKS_MFAS_DH"/>
    <property type="match status" value="1"/>
</dbReference>
<evidence type="ECO:0000250" key="1">
    <source>
        <dbReference type="UniProtKB" id="Q03149"/>
    </source>
</evidence>
<evidence type="ECO:0000255" key="2"/>
<evidence type="ECO:0000255" key="3">
    <source>
        <dbReference type="PROSITE-ProRule" id="PRU00258"/>
    </source>
</evidence>
<evidence type="ECO:0000255" key="4">
    <source>
        <dbReference type="PROSITE-ProRule" id="PRU01348"/>
    </source>
</evidence>
<evidence type="ECO:0000255" key="5">
    <source>
        <dbReference type="PROSITE-ProRule" id="PRU01363"/>
    </source>
</evidence>
<evidence type="ECO:0000255" key="6">
    <source>
        <dbReference type="PROSITE-ProRule" id="PRU10022"/>
    </source>
</evidence>
<evidence type="ECO:0000256" key="7">
    <source>
        <dbReference type="SAM" id="MobiDB-lite"/>
    </source>
</evidence>
<evidence type="ECO:0000269" key="8">
    <source>
    </source>
</evidence>
<evidence type="ECO:0000269" key="9">
    <source>
    </source>
</evidence>
<evidence type="ECO:0000269" key="10">
    <source>
    </source>
</evidence>
<evidence type="ECO:0000269" key="11">
    <source>
    </source>
</evidence>
<evidence type="ECO:0000303" key="12">
    <source>
    </source>
</evidence>
<evidence type="ECO:0000303" key="13">
    <source>
    </source>
</evidence>
<evidence type="ECO:0000305" key="14">
    <source>
    </source>
</evidence>
<proteinExistence type="evidence at protein level"/>
<gene>
    <name evidence="13" type="primary">Pks1</name>
    <name type="ORF">MAA_07745</name>
</gene>
<protein>
    <recommendedName>
        <fullName evidence="12">Polyketide synthase 1</fullName>
        <ecNumber evidence="11">2.3.1.-</ecNumber>
    </recommendedName>
    <alternativeName>
        <fullName evidence="12">Conidial pigment biosynthesis polyketide synthase</fullName>
    </alternativeName>
</protein>
<sequence>MNHVTIKQSDTRADPFRVFIFGDQSSCNLSNLQLLLFKKSNVYLASFIDQVNLTLRHEIARLTAAERQSFPAFSSVQNLVARALKKDTSVALESTLATIYHLCCFINYFGDGQEAYPTGPTTHVSGLCIGALAAAAVSSSKSLAELVQAGIDAVRVSLKVGLLVARTAALFSHQESNGTSSSPWSYALPDSQLPLALAEEAIESYQAKTNIPPLSLPYISAKGQNSWTVSGPPAIVQHFLETSQFEKTLRLTPLAVHAPYHAPHIFSAIDVQHIIRAVGPVSSFSSKLSFISSSSSRNLPTGLKFQDLLYRAVEDILILPLDLREAAENIRLVLEATDNVQQCALFPISTGVGPSLKQSFSPAMASRVSIVDCIMERVAADAGPKSTSGPKPSESKIAIIGMSGRFPESADVEAFWDLLHQGLDVHRPVPPDRFNGELYYDVTGKRKNTCKVMHGCWINDPGLFDAKFFNISPKEAEQSDPGQRLALATAYEALEAAGVVADRTPSTQRDRVGVFYGMTSDDYREVSCGQNVDTYFIPGGNRAFTPGKINYFFKYCGPSVSVDTACSSSLAAIHLACNSIWRNECDTAIAGGTNVMSNPDSFVGLDRGYFLSRTGNCHTFDDDADGYCRADAVGTVILKRLEDAIADHDPILGVISGALTNHSADAVSITRPHSGAQEEIFSKLLTESGVHPHQVSYIEMHGTGTQAGDATEMTSVLNCFAPSTSPRRLPHESLHLGSTKANVGHSESASGVSALIKVLLMMEKNIIPPHCGIKGKINHKFPTDLDERNVHIAKTATQWNRRNELNNIRRAFVNNFSAAGGNTALLVEDYPLRIADSAQQDARTAHVVTVSAKSIKSLKGNLENLKKFVQKQAFTEGFLPKLSYTTTSRRMHHPFRVAIPAANSEQLLCALDEELKHDSYTCSSESPVAFVFSGQGSQYSAMGQHLLHFTIFRDEVHAYDILAQRHGFPSIMPLIDGSVDIEDLEPLVVQLGTVCVQMALASLWMALGMRPAYVVGHSLGHYAALKVAGVLTASDTIYLVAMRARLLQNKCSRGSHAMLAIRSSAAEIQAHLDEGIHDIACINGPQDTVVSGCIDDIDRLSQKLMDKGIKATRVNVPFAFHSAQVDPILDELEAIASQVEFHAPRVAIGCPLLGKTFTAGETPSLEAKHIRRHCRETVNFLDVLRSAKDDGFVSEKTAWIEIGPHTVCSNLVKANINQDITAVPSLMRNKDGWQVLASSVATLYRHGLSVAWDEYHHDFEACKQVLRLPAYSWDNKLYWIDYVHDWLLTRGDPPVQAAAPLPAPPSSFSTASVHRMVHESVEKGKLTLTAECEFTNEQLREVVYGHVVNGNRVCSSSLYTDFGVTLGSYILEKYRPDLQGHAVDVQDMVVNKALVHKEGPTMLLRIDVVLDTTDSKAASMSIYSVNSKGNKTADHAQSSLHFEQPKVWLKSWDSTQYYVERSIEWLKEKADQGLNSRMSSGVIYKLFSSLVDYSTAYKGMQEAIVNTEDFEATALVRFQVDEGNFRCNPMWVDSCGQLAGFLMNGHAKTPKDQVFINHGWQYFRTVRKFSRDKTYRTYVRMRCVEGTTYAGDVYIFDDEGIVGVCGSITFQGIPRKVLNTAMPPPKSQNEAPVRSGPAKPAAKPPRSASSEHSGHFARHANIEPLKLDAALKSATTARNPMLPVFKIVAEEIGIPSASVDNGLVFADYGVDSLLSLSISGRLREELDLDVESSAFETCATLADLAAQLGLDTFSSDQSSGQSSSSGGLSPRSDSIGEITSSVTTPPSLSPRGSVSGSQCKDVCAILAEEIGVSMGEITNDTDLGALGMDSLMSLAVLSRLREELELDLEGDFFVSHPNFSSFKHMFQQGHGDEVEPEPSAELKQYRATSTLLQGNPKSALYTLFLLPDGSGSSFSYAPINAVRKDVCVFGLNCPWLKSAEKLVQFGLKGLATLYVEEIRRRAPHGPYNLGGWSAGGICAYEAAIQFTREGETVERLILLDSPNPIGLEKLPARLFDFVNGLGLFGDGKAPDWLLAHFLAFIDALDEWKPVPWDKALGGNSPPPMTYILWAEDGICKGTDARPEYRDDDPREMKWLLENRTNFGGNNWDVLLGQQSLSIERIQDANHFTMLRKGKNTERVAAFIRSTFG</sequence>
<organism>
    <name type="scientific">Metarhizium robertsii (strain ARSEF 23 / ATCC MYA-3075)</name>
    <name type="common">Metarhizium anisopliae (strain ARSEF 23)</name>
    <dbReference type="NCBI Taxonomy" id="655844"/>
    <lineage>
        <taxon>Eukaryota</taxon>
        <taxon>Fungi</taxon>
        <taxon>Dikarya</taxon>
        <taxon>Ascomycota</taxon>
        <taxon>Pezizomycotina</taxon>
        <taxon>Sordariomycetes</taxon>
        <taxon>Hypocreomycetidae</taxon>
        <taxon>Hypocreales</taxon>
        <taxon>Clavicipitaceae</taxon>
        <taxon>Metarhizium</taxon>
    </lineage>
</organism>
<accession>E9F646</accession>
<reference key="1">
    <citation type="journal article" date="2011" name="PLoS Genet.">
        <title>Genome sequencing and comparative transcriptomics of the model entomopathogenic fungi Metarhizium anisopliae and M. acridum.</title>
        <authorList>
            <person name="Gao Q."/>
            <person name="Jin K."/>
            <person name="Ying S.-H."/>
            <person name="Zhang Y."/>
            <person name="Xiao G."/>
            <person name="Shang Y."/>
            <person name="Duan Z."/>
            <person name="Hu X."/>
            <person name="Xie X.-Q."/>
            <person name="Zhou G."/>
            <person name="Peng G."/>
            <person name="Luo Z."/>
            <person name="Huang W."/>
            <person name="Wang B."/>
            <person name="Fang W."/>
            <person name="Wang S."/>
            <person name="Zhong Y."/>
            <person name="Ma L.-J."/>
            <person name="St Leger R.J."/>
            <person name="Zhao G.-P."/>
            <person name="Pei Y."/>
            <person name="Feng M.-G."/>
            <person name="Xia Y."/>
            <person name="Wang C."/>
        </authorList>
    </citation>
    <scope>NUCLEOTIDE SEQUENCE [LARGE SCALE GENOMIC DNA]</scope>
    <source>
        <strain>ARSEF 23 / ATCC MYA-3075</strain>
    </source>
</reference>
<reference key="2">
    <citation type="journal article" date="2014" name="Proc. Natl. Acad. Sci. U.S.A.">
        <title>Trajectory and genomic determinants of fungal-pathogen speciation and host adaptation.</title>
        <authorList>
            <person name="Hu X."/>
            <person name="Xiao G."/>
            <person name="Zheng P."/>
            <person name="Shang Y."/>
            <person name="Su Y."/>
            <person name="Zhang X."/>
            <person name="Liu X."/>
            <person name="Zhan S."/>
            <person name="St Leger R.J."/>
            <person name="Wang C."/>
        </authorList>
    </citation>
    <scope>GENOME REANNOTATION</scope>
    <source>
        <strain>ARSEF 23 / ATCC MYA-3075</strain>
    </source>
</reference>
<reference key="3">
    <citation type="journal article" date="2010" name="Fungal Genet. Biol.">
        <title>A laccase exclusively expressed by Metarhizium anisopliae during isotropic growth is involved in pigmentation, tolerance to abiotic stresses and virulence.</title>
        <authorList>
            <person name="Fang W."/>
            <person name="Fernandes E.K."/>
            <person name="Roberts D.W."/>
            <person name="Bidochka M.J."/>
            <person name="St Leger R.J."/>
        </authorList>
    </citation>
    <scope>FUNCTION</scope>
</reference>
<reference key="4">
    <citation type="journal article" date="2015" name="Fungal Genet. Biol.">
        <title>Biosynthesis of non-melanin pigment by a divergent polyketide synthase in Metarhizium robertsii.</title>
        <authorList>
            <person name="Chen Y."/>
            <person name="Feng P."/>
            <person name="Shang Y."/>
            <person name="Xu Y.J."/>
            <person name="Wang C."/>
        </authorList>
    </citation>
    <scope>FUNCTION</scope>
    <scope>DISRUPTION PHENOTYPE</scope>
</reference>
<reference key="5">
    <citation type="journal article" date="2017" name="Environ. Microbiol.">
        <title>Genome-wide identification of pathogenicity, conidiation and colony sectorization genes in Metarhizium robertsii.</title>
        <authorList>
            <person name="Zeng G."/>
            <person name="Chen X."/>
            <person name="Zhang X."/>
            <person name="Zhang Q."/>
            <person name="Xu C."/>
            <person name="Mi W."/>
            <person name="Guo N."/>
            <person name="Zhao H."/>
            <person name="You Y."/>
            <person name="Dryburgh F.J."/>
            <person name="Bidochka M.J."/>
            <person name="St Leger R.J."/>
            <person name="Zhang L."/>
            <person name="Fang W."/>
        </authorList>
    </citation>
    <scope>IDENTIFICATION</scope>
    <scope>FUNCTION</scope>
    <scope>DISRUPTION PHENOTYPE</scope>
    <scope>PATHWAY</scope>
</reference>
<reference key="6">
    <citation type="journal article" date="2018" name="PLoS Genet.">
        <title>Duplication of a Pks gene cluster and subsequent functional diversification facilitate environmental adaptation in Metarhizium species.</title>
        <authorList>
            <person name="Zeng G."/>
            <person name="Zhang P."/>
            <person name="Zhang Q."/>
            <person name="Zhao H."/>
            <person name="Li Z."/>
            <person name="Zhang X."/>
            <person name="Wang C."/>
            <person name="Yin W.B."/>
            <person name="Fang W."/>
        </authorList>
    </citation>
    <scope>IDENTIFICATION</scope>
    <scope>DISRUPTION PHENOTYPE</scope>
    <scope>FUNCTION</scope>
    <scope>CATALYTIC ACTIVITY</scope>
    <scope>INDUCTION</scope>
    <scope>DOMAIN</scope>
    <scope>PATHWAY</scope>
</reference>